<name>ERO2_ARATH</name>
<gene>
    <name type="primary">AERO2</name>
    <name type="synonym">ERO2</name>
    <name type="ordered locus">At2g38960</name>
    <name type="ORF">T7F6.13</name>
</gene>
<comment type="function">
    <text evidence="1">Essential oxidoreductase that oxidizes proteins in the endoplasmic reticulum to produce disulfide bonds. Acts by oxidizing directly PDI isomerase through a direct disulfide exchange. Does not act as a direct oxidant of folding substrate, but relies on PDI to transfer oxidizing equivalent. Does not oxidize all PDI related proteins, suggesting that it can discriminate between PDI and related proteins. Its reoxidation probably involves electron transfer to molecular oxygen via FAD. Acts independently of glutathione. May be responsible for a significant proportion of reactive oxygen species (ROS) in the cell, thereby being a source of oxidative stress (By similarity).</text>
</comment>
<comment type="cofactor">
    <cofactor evidence="2">
        <name>FAD</name>
        <dbReference type="ChEBI" id="CHEBI:57692"/>
    </cofactor>
</comment>
<comment type="subunit">
    <text evidence="1">May function both as a monomer and a homodimer.</text>
</comment>
<comment type="subcellular location">
    <subcellularLocation>
        <location evidence="4">Endoplasmic reticulum membrane</location>
        <topology evidence="4">Peripheral membrane protein</topology>
        <orientation evidence="4">Lumenal side</orientation>
    </subcellularLocation>
</comment>
<comment type="alternative products">
    <event type="alternative splicing"/>
    <isoform>
        <id>Q7X9I4-1</id>
        <name>1</name>
        <sequence type="displayed"/>
    </isoform>
    <text>A number of isoforms are produced. According to EST sequences.</text>
</comment>
<comment type="PTM">
    <text evidence="4">N-glycosylated.</text>
</comment>
<comment type="similarity">
    <text evidence="5">Belongs to the EROs family.</text>
</comment>
<comment type="sequence caution" evidence="5">
    <conflict type="erroneous gene model prediction">
        <sequence resource="EMBL-CDS" id="AAC79609"/>
    </conflict>
</comment>
<organism>
    <name type="scientific">Arabidopsis thaliana</name>
    <name type="common">Mouse-ear cress</name>
    <dbReference type="NCBI Taxonomy" id="3702"/>
    <lineage>
        <taxon>Eukaryota</taxon>
        <taxon>Viridiplantae</taxon>
        <taxon>Streptophyta</taxon>
        <taxon>Embryophyta</taxon>
        <taxon>Tracheophyta</taxon>
        <taxon>Spermatophyta</taxon>
        <taxon>Magnoliopsida</taxon>
        <taxon>eudicotyledons</taxon>
        <taxon>Gunneridae</taxon>
        <taxon>Pentapetalae</taxon>
        <taxon>rosids</taxon>
        <taxon>malvids</taxon>
        <taxon>Brassicales</taxon>
        <taxon>Brassicaceae</taxon>
        <taxon>Camelineae</taxon>
        <taxon>Arabidopsis</taxon>
    </lineage>
</organism>
<feature type="signal peptide" evidence="3">
    <location>
        <begin position="1"/>
        <end position="37"/>
    </location>
</feature>
<feature type="chain" id="PRO_0000008423" description="Endoplasmic reticulum oxidoreductin-2">
    <location>
        <begin position="38"/>
        <end position="472"/>
    </location>
</feature>
<feature type="binding site" evidence="2">
    <location>
        <position position="200"/>
    </location>
    <ligand>
        <name>FAD</name>
        <dbReference type="ChEBI" id="CHEBI:57692"/>
    </ligand>
</feature>
<feature type="binding site" evidence="2">
    <location>
        <position position="202"/>
    </location>
    <ligand>
        <name>FAD</name>
        <dbReference type="ChEBI" id="CHEBI:57692"/>
    </ligand>
</feature>
<feature type="binding site" evidence="2">
    <location>
        <position position="213"/>
    </location>
    <ligand>
        <name>FAD</name>
        <dbReference type="ChEBI" id="CHEBI:57692"/>
    </ligand>
</feature>
<feature type="binding site" evidence="2">
    <location>
        <position position="241"/>
    </location>
    <ligand>
        <name>FAD</name>
        <dbReference type="ChEBI" id="CHEBI:57692"/>
    </ligand>
</feature>
<feature type="binding site" evidence="2">
    <location>
        <position position="244"/>
    </location>
    <ligand>
        <name>FAD</name>
        <dbReference type="ChEBI" id="CHEBI:57692"/>
    </ligand>
</feature>
<feature type="binding site" evidence="2">
    <location>
        <position position="274"/>
    </location>
    <ligand>
        <name>FAD</name>
        <dbReference type="ChEBI" id="CHEBI:57692"/>
    </ligand>
</feature>
<feature type="binding site" evidence="2">
    <location>
        <position position="281"/>
    </location>
    <ligand>
        <name>FAD</name>
        <dbReference type="ChEBI" id="CHEBI:57692"/>
    </ligand>
</feature>
<feature type="glycosylation site" description="N-linked (GlcNAc...) asparagine" evidence="3">
    <location>
        <position position="44"/>
    </location>
</feature>
<feature type="glycosylation site" description="N-linked (GlcNAc...) asparagine" evidence="3">
    <location>
        <position position="267"/>
    </location>
</feature>
<feature type="glycosylation site" description="N-linked (GlcNAc...) asparagine" evidence="3">
    <location>
        <position position="364"/>
    </location>
</feature>
<feature type="disulfide bond" evidence="2">
    <location>
        <begin position="55"/>
        <end position="74"/>
    </location>
</feature>
<feature type="disulfide bond" evidence="2">
    <location>
        <begin position="57"/>
        <end position="72"/>
    </location>
</feature>
<feature type="disulfide bond" evidence="2">
    <location>
        <begin position="111"/>
        <end position="371"/>
    </location>
</feature>
<feature type="disulfide bond" description="Redox-active" evidence="2">
    <location>
        <begin position="120"/>
        <end position="125"/>
    </location>
</feature>
<feature type="disulfide bond" evidence="2">
    <location>
        <begin position="221"/>
        <end position="230"/>
    </location>
</feature>
<feature type="disulfide bond" description="Redox-active" evidence="2">
    <location>
        <begin position="374"/>
        <end position="377"/>
    </location>
</feature>
<keyword id="KW-0025">Alternative splicing</keyword>
<keyword id="KW-1015">Disulfide bond</keyword>
<keyword id="KW-0249">Electron transport</keyword>
<keyword id="KW-0256">Endoplasmic reticulum</keyword>
<keyword id="KW-0274">FAD</keyword>
<keyword id="KW-0285">Flavoprotein</keyword>
<keyword id="KW-0325">Glycoprotein</keyword>
<keyword id="KW-0472">Membrane</keyword>
<keyword id="KW-0560">Oxidoreductase</keyword>
<keyword id="KW-0676">Redox-active center</keyword>
<keyword id="KW-1185">Reference proteome</keyword>
<keyword id="KW-0732">Signal</keyword>
<keyword id="KW-0813">Transport</keyword>
<proteinExistence type="evidence at protein level"/>
<protein>
    <recommendedName>
        <fullName>Endoplasmic reticulum oxidoreductin-2</fullName>
        <ecNumber>1.8.4.-</ecNumber>
    </recommendedName>
</protein>
<accession>Q7X9I4</accession>
<accession>Q9ZV11</accession>
<dbReference type="EC" id="1.8.4.-"/>
<dbReference type="EMBL" id="AJ551466">
    <property type="protein sequence ID" value="CAD83855.1"/>
    <property type="molecule type" value="mRNA"/>
</dbReference>
<dbReference type="EMBL" id="AC005770">
    <property type="protein sequence ID" value="AAC79609.1"/>
    <property type="status" value="ALT_SEQ"/>
    <property type="molecule type" value="Genomic_DNA"/>
</dbReference>
<dbReference type="EMBL" id="CP002685">
    <property type="protein sequence ID" value="AEC09618.1"/>
    <property type="molecule type" value="Genomic_DNA"/>
</dbReference>
<dbReference type="PIR" id="E84811">
    <property type="entry name" value="E84811"/>
</dbReference>
<dbReference type="RefSeq" id="NP_181430.2">
    <molecule id="Q7X9I4-1"/>
    <property type="nucleotide sequence ID" value="NM_129454.4"/>
</dbReference>
<dbReference type="SMR" id="Q7X9I4"/>
<dbReference type="FunCoup" id="Q7X9I4">
    <property type="interactions" value="3763"/>
</dbReference>
<dbReference type="STRING" id="3702.Q7X9I4"/>
<dbReference type="GlyCosmos" id="Q7X9I4">
    <property type="glycosylation" value="3 sites, No reported glycans"/>
</dbReference>
<dbReference type="GlyGen" id="Q7X9I4">
    <property type="glycosylation" value="3 sites"/>
</dbReference>
<dbReference type="PaxDb" id="3702-AT2G38960.3"/>
<dbReference type="ProteomicsDB" id="220699">
    <molecule id="Q7X9I4-1"/>
</dbReference>
<dbReference type="EnsemblPlants" id="AT2G38960.1">
    <molecule id="Q7X9I4-1"/>
    <property type="protein sequence ID" value="AT2G38960.1"/>
    <property type="gene ID" value="AT2G38960"/>
</dbReference>
<dbReference type="GeneID" id="818481"/>
<dbReference type="Gramene" id="AT2G38960.1">
    <molecule id="Q7X9I4-1"/>
    <property type="protein sequence ID" value="AT2G38960.1"/>
    <property type="gene ID" value="AT2G38960"/>
</dbReference>
<dbReference type="KEGG" id="ath:AT2G38960"/>
<dbReference type="Araport" id="AT2G38960"/>
<dbReference type="TAIR" id="AT2G38960">
    <property type="gene designation" value="ERO2"/>
</dbReference>
<dbReference type="eggNOG" id="KOG2608">
    <property type="taxonomic scope" value="Eukaryota"/>
</dbReference>
<dbReference type="HOGENOM" id="CLU_023061_2_1_1"/>
<dbReference type="InParanoid" id="Q7X9I4"/>
<dbReference type="PhylomeDB" id="Q7X9I4"/>
<dbReference type="CD-CODE" id="4299E36E">
    <property type="entry name" value="Nucleolus"/>
</dbReference>
<dbReference type="PRO" id="PR:Q7X9I4"/>
<dbReference type="Proteomes" id="UP000006548">
    <property type="component" value="Chromosome 2"/>
</dbReference>
<dbReference type="ExpressionAtlas" id="Q7X9I4">
    <property type="expression patterns" value="baseline and differential"/>
</dbReference>
<dbReference type="GO" id="GO:0005789">
    <property type="term" value="C:endoplasmic reticulum membrane"/>
    <property type="evidence" value="ECO:0007669"/>
    <property type="project" value="UniProtKB-SubCell"/>
</dbReference>
<dbReference type="GO" id="GO:0071949">
    <property type="term" value="F:FAD binding"/>
    <property type="evidence" value="ECO:0007669"/>
    <property type="project" value="InterPro"/>
</dbReference>
<dbReference type="GO" id="GO:0015035">
    <property type="term" value="F:protein-disulfide reductase activity"/>
    <property type="evidence" value="ECO:0007669"/>
    <property type="project" value="InterPro"/>
</dbReference>
<dbReference type="GO" id="GO:0016972">
    <property type="term" value="F:thiol oxidase activity"/>
    <property type="evidence" value="ECO:0007669"/>
    <property type="project" value="InterPro"/>
</dbReference>
<dbReference type="GO" id="GO:0034975">
    <property type="term" value="P:protein folding in endoplasmic reticulum"/>
    <property type="evidence" value="ECO:0007669"/>
    <property type="project" value="InterPro"/>
</dbReference>
<dbReference type="InterPro" id="IPR007266">
    <property type="entry name" value="Ero1"/>
</dbReference>
<dbReference type="InterPro" id="IPR037192">
    <property type="entry name" value="ERO1-like_sf"/>
</dbReference>
<dbReference type="PANTHER" id="PTHR12613:SF0">
    <property type="entry name" value="ERO1-LIKE PROTEIN"/>
    <property type="match status" value="1"/>
</dbReference>
<dbReference type="PANTHER" id="PTHR12613">
    <property type="entry name" value="ERO1-RELATED"/>
    <property type="match status" value="1"/>
</dbReference>
<dbReference type="Pfam" id="PF04137">
    <property type="entry name" value="ERO1"/>
    <property type="match status" value="1"/>
</dbReference>
<dbReference type="PIRSF" id="PIRSF017205">
    <property type="entry name" value="ERO1"/>
    <property type="match status" value="1"/>
</dbReference>
<dbReference type="SUPFAM" id="SSF110019">
    <property type="entry name" value="ERO1-like"/>
    <property type="match status" value="1"/>
</dbReference>
<sequence length="472" mass="53449">MAETDVGSVKGKEKGSGKRWILLIGAIAAVLLAVVVAVFLNTQNSSISEFTGKICNCRQAEQQKYIGIVEDCCCDYETVNRLNTEVLNPLLQDLVKTPFYRYFKVKLWCDCPFWPDDGMCRLRDCSVCECPESEFPEVFKKPLSQYNPVCQEGKPQATVDRTLDTRAFRGWTVTDNPWTSDDETDNDEMTYVNLRLNPERYTGYIGPSARRIWEAIYSENCPKHTSEGSCQEEKILYKLVSGLHSSISVHIASDYLLDEATNLWGQNLTLLYDRVLRYPDRVQNLYFTFLFVLRAVTKAEDYLGEAEYETGNVIEDLKTKSLVKQVVSDPKTKAACPVPFDEAKLWKGQRGPELKQQLEKQFRNISAIMDCVGCEKCRLWGKLQILGLGTALKILFTVNGEDNLRHNLELQRNEVIALMNLLHRLSESVKYVHDMSPAAERIAGGHASSGNSFWQRIVTSIAQSKAVSGKRS</sequence>
<reference key="1">
    <citation type="journal article" date="2003" name="Antioxid. Redox Signal.">
        <title>Cloning and initial characterization of the Arabidopsis thaliana endoplasmic reticulum oxidoreductins.</title>
        <authorList>
            <person name="Dixon D.P."/>
            <person name="Van Lith M."/>
            <person name="Edwards R."/>
            <person name="Benham A."/>
        </authorList>
    </citation>
    <scope>NUCLEOTIDE SEQUENCE [MRNA]</scope>
    <scope>SUBCELLULAR LOCATION</scope>
    <scope>GLYCOSYLATION</scope>
    <source>
        <tissue>Cultured root</tissue>
    </source>
</reference>
<reference key="2">
    <citation type="journal article" date="1999" name="Nature">
        <title>Sequence and analysis of chromosome 2 of the plant Arabidopsis thaliana.</title>
        <authorList>
            <person name="Lin X."/>
            <person name="Kaul S."/>
            <person name="Rounsley S.D."/>
            <person name="Shea T.P."/>
            <person name="Benito M.-I."/>
            <person name="Town C.D."/>
            <person name="Fujii C.Y."/>
            <person name="Mason T.M."/>
            <person name="Bowman C.L."/>
            <person name="Barnstead M.E."/>
            <person name="Feldblyum T.V."/>
            <person name="Buell C.R."/>
            <person name="Ketchum K.A."/>
            <person name="Lee J.J."/>
            <person name="Ronning C.M."/>
            <person name="Koo H.L."/>
            <person name="Moffat K.S."/>
            <person name="Cronin L.A."/>
            <person name="Shen M."/>
            <person name="Pai G."/>
            <person name="Van Aken S."/>
            <person name="Umayam L."/>
            <person name="Tallon L.J."/>
            <person name="Gill J.E."/>
            <person name="Adams M.D."/>
            <person name="Carrera A.J."/>
            <person name="Creasy T.H."/>
            <person name="Goodman H.M."/>
            <person name="Somerville C.R."/>
            <person name="Copenhaver G.P."/>
            <person name="Preuss D."/>
            <person name="Nierman W.C."/>
            <person name="White O."/>
            <person name="Eisen J.A."/>
            <person name="Salzberg S.L."/>
            <person name="Fraser C.M."/>
            <person name="Venter J.C."/>
        </authorList>
    </citation>
    <scope>NUCLEOTIDE SEQUENCE [LARGE SCALE GENOMIC DNA]</scope>
    <source>
        <strain>cv. Columbia</strain>
    </source>
</reference>
<reference key="3">
    <citation type="journal article" date="2017" name="Plant J.">
        <title>Araport11: a complete reannotation of the Arabidopsis thaliana reference genome.</title>
        <authorList>
            <person name="Cheng C.Y."/>
            <person name="Krishnakumar V."/>
            <person name="Chan A.P."/>
            <person name="Thibaud-Nissen F."/>
            <person name="Schobel S."/>
            <person name="Town C.D."/>
        </authorList>
    </citation>
    <scope>GENOME REANNOTATION</scope>
    <source>
        <strain>cv. Columbia</strain>
    </source>
</reference>
<evidence type="ECO:0000250" key="1"/>
<evidence type="ECO:0000250" key="2">
    <source>
        <dbReference type="UniProtKB" id="Q96HE7"/>
    </source>
</evidence>
<evidence type="ECO:0000255" key="3"/>
<evidence type="ECO:0000269" key="4">
    <source>
    </source>
</evidence>
<evidence type="ECO:0000305" key="5"/>